<gene>
    <name evidence="1" type="primary">rplE</name>
    <name type="ordered locus">FTN_0251</name>
</gene>
<sequence>MARLKDYYQKELVAKLKTELGLDNIMEVPAIKKITLNMGVGDAAKDKKIMTFALNDLTAIAGQKPVVTKSKKSIAGFKIRDGWPIGAKVTLRGDRMYEFLDRLITIAIPRIRDFRGLSAKSFDGRGNYSLGMREQISFPEIDYDKVDSIRGLDISITTTAKNDDQGRALLKAFGFPFKS</sequence>
<protein>
    <recommendedName>
        <fullName evidence="1">Large ribosomal subunit protein uL5</fullName>
    </recommendedName>
    <alternativeName>
        <fullName evidence="2">50S ribosomal protein L5</fullName>
    </alternativeName>
</protein>
<dbReference type="EMBL" id="CP000439">
    <property type="protein sequence ID" value="ABK89160.1"/>
    <property type="molecule type" value="Genomic_DNA"/>
</dbReference>
<dbReference type="RefSeq" id="WP_003014352.1">
    <property type="nucleotide sequence ID" value="NZ_CP009633.1"/>
</dbReference>
<dbReference type="SMR" id="A0Q4J5"/>
<dbReference type="GeneID" id="75264249"/>
<dbReference type="KEGG" id="ftn:FTN_0251"/>
<dbReference type="KEGG" id="ftx:AW25_1791"/>
<dbReference type="BioCyc" id="FTUL401614:G1G75-262-MONOMER"/>
<dbReference type="Proteomes" id="UP000000762">
    <property type="component" value="Chromosome"/>
</dbReference>
<dbReference type="GO" id="GO:1990904">
    <property type="term" value="C:ribonucleoprotein complex"/>
    <property type="evidence" value="ECO:0007669"/>
    <property type="project" value="UniProtKB-KW"/>
</dbReference>
<dbReference type="GO" id="GO:0005840">
    <property type="term" value="C:ribosome"/>
    <property type="evidence" value="ECO:0007669"/>
    <property type="project" value="UniProtKB-KW"/>
</dbReference>
<dbReference type="GO" id="GO:0019843">
    <property type="term" value="F:rRNA binding"/>
    <property type="evidence" value="ECO:0007669"/>
    <property type="project" value="UniProtKB-UniRule"/>
</dbReference>
<dbReference type="GO" id="GO:0003735">
    <property type="term" value="F:structural constituent of ribosome"/>
    <property type="evidence" value="ECO:0007669"/>
    <property type="project" value="InterPro"/>
</dbReference>
<dbReference type="GO" id="GO:0000049">
    <property type="term" value="F:tRNA binding"/>
    <property type="evidence" value="ECO:0007669"/>
    <property type="project" value="UniProtKB-UniRule"/>
</dbReference>
<dbReference type="GO" id="GO:0006412">
    <property type="term" value="P:translation"/>
    <property type="evidence" value="ECO:0007669"/>
    <property type="project" value="UniProtKB-UniRule"/>
</dbReference>
<dbReference type="FunFam" id="3.30.1440.10:FF:000001">
    <property type="entry name" value="50S ribosomal protein L5"/>
    <property type="match status" value="1"/>
</dbReference>
<dbReference type="Gene3D" id="3.30.1440.10">
    <property type="match status" value="1"/>
</dbReference>
<dbReference type="HAMAP" id="MF_01333_B">
    <property type="entry name" value="Ribosomal_uL5_B"/>
    <property type="match status" value="1"/>
</dbReference>
<dbReference type="InterPro" id="IPR002132">
    <property type="entry name" value="Ribosomal_uL5"/>
</dbReference>
<dbReference type="InterPro" id="IPR020930">
    <property type="entry name" value="Ribosomal_uL5_bac-type"/>
</dbReference>
<dbReference type="InterPro" id="IPR031309">
    <property type="entry name" value="Ribosomal_uL5_C"/>
</dbReference>
<dbReference type="InterPro" id="IPR020929">
    <property type="entry name" value="Ribosomal_uL5_CS"/>
</dbReference>
<dbReference type="InterPro" id="IPR022803">
    <property type="entry name" value="Ribosomal_uL5_dom_sf"/>
</dbReference>
<dbReference type="InterPro" id="IPR031310">
    <property type="entry name" value="Ribosomal_uL5_N"/>
</dbReference>
<dbReference type="NCBIfam" id="NF000585">
    <property type="entry name" value="PRK00010.1"/>
    <property type="match status" value="1"/>
</dbReference>
<dbReference type="PANTHER" id="PTHR11994">
    <property type="entry name" value="60S RIBOSOMAL PROTEIN L11-RELATED"/>
    <property type="match status" value="1"/>
</dbReference>
<dbReference type="Pfam" id="PF00281">
    <property type="entry name" value="Ribosomal_L5"/>
    <property type="match status" value="1"/>
</dbReference>
<dbReference type="Pfam" id="PF00673">
    <property type="entry name" value="Ribosomal_L5_C"/>
    <property type="match status" value="1"/>
</dbReference>
<dbReference type="PIRSF" id="PIRSF002161">
    <property type="entry name" value="Ribosomal_L5"/>
    <property type="match status" value="1"/>
</dbReference>
<dbReference type="SUPFAM" id="SSF55282">
    <property type="entry name" value="RL5-like"/>
    <property type="match status" value="1"/>
</dbReference>
<dbReference type="PROSITE" id="PS00358">
    <property type="entry name" value="RIBOSOMAL_L5"/>
    <property type="match status" value="1"/>
</dbReference>
<feature type="chain" id="PRO_1000052738" description="Large ribosomal subunit protein uL5">
    <location>
        <begin position="1"/>
        <end position="179"/>
    </location>
</feature>
<keyword id="KW-0687">Ribonucleoprotein</keyword>
<keyword id="KW-0689">Ribosomal protein</keyword>
<keyword id="KW-0694">RNA-binding</keyword>
<keyword id="KW-0699">rRNA-binding</keyword>
<keyword id="KW-0820">tRNA-binding</keyword>
<comment type="function">
    <text evidence="1">This is one of the proteins that bind and probably mediate the attachment of the 5S RNA into the large ribosomal subunit, where it forms part of the central protuberance. In the 70S ribosome it contacts protein S13 of the 30S subunit (bridge B1b), connecting the 2 subunits; this bridge is implicated in subunit movement. Contacts the P site tRNA; the 5S rRNA and some of its associated proteins might help stabilize positioning of ribosome-bound tRNAs.</text>
</comment>
<comment type="subunit">
    <text evidence="1">Part of the 50S ribosomal subunit; part of the 5S rRNA/L5/L18/L25 subcomplex. Contacts the 5S rRNA and the P site tRNA. Forms a bridge to the 30S subunit in the 70S ribosome.</text>
</comment>
<comment type="similarity">
    <text evidence="1">Belongs to the universal ribosomal protein uL5 family.</text>
</comment>
<reference key="1">
    <citation type="journal article" date="2007" name="Genome Biol.">
        <title>Comparison of Francisella tularensis genomes reveals evolutionary events associated with the emergence of human pathogenic strains.</title>
        <authorList>
            <person name="Rohmer L."/>
            <person name="Fong C."/>
            <person name="Abmayr S."/>
            <person name="Wasnick M."/>
            <person name="Larson Freeman T.J."/>
            <person name="Radey M."/>
            <person name="Guina T."/>
            <person name="Svensson K."/>
            <person name="Hayden H.S."/>
            <person name="Jacobs M."/>
            <person name="Gallagher L.A."/>
            <person name="Manoil C."/>
            <person name="Ernst R.K."/>
            <person name="Drees B."/>
            <person name="Buckley D."/>
            <person name="Haugen E."/>
            <person name="Bovee D."/>
            <person name="Zhou Y."/>
            <person name="Chang J."/>
            <person name="Levy R."/>
            <person name="Lim R."/>
            <person name="Gillett W."/>
            <person name="Guenthener D."/>
            <person name="Kang A."/>
            <person name="Shaffer S.A."/>
            <person name="Taylor G."/>
            <person name="Chen J."/>
            <person name="Gallis B."/>
            <person name="D'Argenio D.A."/>
            <person name="Forsman M."/>
            <person name="Olson M.V."/>
            <person name="Goodlett D.R."/>
            <person name="Kaul R."/>
            <person name="Miller S.I."/>
            <person name="Brittnacher M.J."/>
        </authorList>
    </citation>
    <scope>NUCLEOTIDE SEQUENCE [LARGE SCALE GENOMIC DNA]</scope>
    <source>
        <strain>U112</strain>
    </source>
</reference>
<accession>A0Q4J5</accession>
<organism>
    <name type="scientific">Francisella tularensis subsp. novicida (strain U112)</name>
    <dbReference type="NCBI Taxonomy" id="401614"/>
    <lineage>
        <taxon>Bacteria</taxon>
        <taxon>Pseudomonadati</taxon>
        <taxon>Pseudomonadota</taxon>
        <taxon>Gammaproteobacteria</taxon>
        <taxon>Thiotrichales</taxon>
        <taxon>Francisellaceae</taxon>
        <taxon>Francisella</taxon>
    </lineage>
</organism>
<name>RL5_FRATN</name>
<proteinExistence type="inferred from homology"/>
<evidence type="ECO:0000255" key="1">
    <source>
        <dbReference type="HAMAP-Rule" id="MF_01333"/>
    </source>
</evidence>
<evidence type="ECO:0000305" key="2"/>